<accession>Q0T029</accession>
<keyword id="KW-0010">Activator</keyword>
<keyword id="KW-0238">DNA-binding</keyword>
<keyword id="KW-0804">Transcription</keyword>
<keyword id="KW-0805">Transcription regulation</keyword>
<organism>
    <name type="scientific">Shigella flexneri serotype 5b (strain 8401)</name>
    <dbReference type="NCBI Taxonomy" id="373384"/>
    <lineage>
        <taxon>Bacteria</taxon>
        <taxon>Pseudomonadati</taxon>
        <taxon>Pseudomonadota</taxon>
        <taxon>Gammaproteobacteria</taxon>
        <taxon>Enterobacterales</taxon>
        <taxon>Enterobacteriaceae</taxon>
        <taxon>Shigella</taxon>
    </lineage>
</organism>
<feature type="chain" id="PRO_1000023347" description="DNA-binding protein Fis">
    <location>
        <begin position="1"/>
        <end position="98"/>
    </location>
</feature>
<feature type="DNA-binding region" description="H-T-H motif" evidence="1">
    <location>
        <begin position="74"/>
        <end position="93"/>
    </location>
</feature>
<sequence>MFEQRVNSDVLTVSTVNSQDQVTQKPLRDSVKQALKNYFAQLNGQDVNDLYELVLAEVEQPLLDMVMQYTRGNQTRAALMMGINRGTLRKKLKKYGMN</sequence>
<comment type="function">
    <text evidence="1">Activates ribosomal RNA transcription. Plays a direct role in upstream activation of rRNA promoters.</text>
</comment>
<comment type="subunit">
    <text evidence="1">Homodimer.</text>
</comment>
<comment type="similarity">
    <text evidence="1">Belongs to the transcriptional regulatory Fis family.</text>
</comment>
<proteinExistence type="inferred from homology"/>
<protein>
    <recommendedName>
        <fullName evidence="1">DNA-binding protein Fis</fullName>
    </recommendedName>
</protein>
<dbReference type="EMBL" id="CP000266">
    <property type="protein sequence ID" value="ABF05336.1"/>
    <property type="molecule type" value="Genomic_DNA"/>
</dbReference>
<dbReference type="RefSeq" id="WP_000462905.1">
    <property type="nucleotide sequence ID" value="NC_008258.1"/>
</dbReference>
<dbReference type="SMR" id="Q0T029"/>
<dbReference type="GeneID" id="98390389"/>
<dbReference type="KEGG" id="sfv:SFV_3286"/>
<dbReference type="HOGENOM" id="CLU_158040_3_0_6"/>
<dbReference type="Proteomes" id="UP000000659">
    <property type="component" value="Chromosome"/>
</dbReference>
<dbReference type="GO" id="GO:0003700">
    <property type="term" value="F:DNA-binding transcription factor activity"/>
    <property type="evidence" value="ECO:0007669"/>
    <property type="project" value="UniProtKB-UniRule"/>
</dbReference>
<dbReference type="GO" id="GO:0043565">
    <property type="term" value="F:sequence-specific DNA binding"/>
    <property type="evidence" value="ECO:0007669"/>
    <property type="project" value="InterPro"/>
</dbReference>
<dbReference type="FunFam" id="1.10.10.60:FF:000006">
    <property type="entry name" value="DNA-binding protein Fis"/>
    <property type="match status" value="1"/>
</dbReference>
<dbReference type="Gene3D" id="1.10.10.60">
    <property type="entry name" value="Homeodomain-like"/>
    <property type="match status" value="1"/>
</dbReference>
<dbReference type="HAMAP" id="MF_00166">
    <property type="entry name" value="DNA_binding_Fis"/>
    <property type="match status" value="1"/>
</dbReference>
<dbReference type="InterPro" id="IPR005412">
    <property type="entry name" value="Fis_DNA-bd"/>
</dbReference>
<dbReference type="InterPro" id="IPR009057">
    <property type="entry name" value="Homeodomain-like_sf"/>
</dbReference>
<dbReference type="InterPro" id="IPR002197">
    <property type="entry name" value="HTH_Fis"/>
</dbReference>
<dbReference type="InterPro" id="IPR050207">
    <property type="entry name" value="Trans_regulatory_Fis"/>
</dbReference>
<dbReference type="NCBIfam" id="NF001659">
    <property type="entry name" value="PRK00430.1"/>
    <property type="match status" value="1"/>
</dbReference>
<dbReference type="PANTHER" id="PTHR47918">
    <property type="entry name" value="DNA-BINDING PROTEIN FIS"/>
    <property type="match status" value="1"/>
</dbReference>
<dbReference type="PANTHER" id="PTHR47918:SF1">
    <property type="entry name" value="DNA-BINDING PROTEIN FIS"/>
    <property type="match status" value="1"/>
</dbReference>
<dbReference type="Pfam" id="PF02954">
    <property type="entry name" value="HTH_8"/>
    <property type="match status" value="1"/>
</dbReference>
<dbReference type="PIRSF" id="PIRSF002097">
    <property type="entry name" value="DNA-binding_Fis"/>
    <property type="match status" value="1"/>
</dbReference>
<dbReference type="PRINTS" id="PR01591">
    <property type="entry name" value="DNABINDNGFIS"/>
</dbReference>
<dbReference type="PRINTS" id="PR01590">
    <property type="entry name" value="HTHFIS"/>
</dbReference>
<dbReference type="SUPFAM" id="SSF46689">
    <property type="entry name" value="Homeodomain-like"/>
    <property type="match status" value="1"/>
</dbReference>
<name>FIS_SHIF8</name>
<evidence type="ECO:0000255" key="1">
    <source>
        <dbReference type="HAMAP-Rule" id="MF_00166"/>
    </source>
</evidence>
<gene>
    <name evidence="1" type="primary">fis</name>
    <name type="ordered locus">SFV_3286</name>
</gene>
<reference key="1">
    <citation type="journal article" date="2006" name="BMC Genomics">
        <title>Complete genome sequence of Shigella flexneri 5b and comparison with Shigella flexneri 2a.</title>
        <authorList>
            <person name="Nie H."/>
            <person name="Yang F."/>
            <person name="Zhang X."/>
            <person name="Yang J."/>
            <person name="Chen L."/>
            <person name="Wang J."/>
            <person name="Xiong Z."/>
            <person name="Peng J."/>
            <person name="Sun L."/>
            <person name="Dong J."/>
            <person name="Xue Y."/>
            <person name="Xu X."/>
            <person name="Chen S."/>
            <person name="Yao Z."/>
            <person name="Shen Y."/>
            <person name="Jin Q."/>
        </authorList>
    </citation>
    <scope>NUCLEOTIDE SEQUENCE [LARGE SCALE GENOMIC DNA]</scope>
    <source>
        <strain>8401</strain>
    </source>
</reference>